<organism>
    <name type="scientific">Parachaenichthys charcoti</name>
    <name type="common">Charcot's dragonfish</name>
    <name type="synonym">Chaenichthys charcoti</name>
    <dbReference type="NCBI Taxonomy" id="36187"/>
    <lineage>
        <taxon>Eukaryota</taxon>
        <taxon>Metazoa</taxon>
        <taxon>Chordata</taxon>
        <taxon>Craniata</taxon>
        <taxon>Vertebrata</taxon>
        <taxon>Euteleostomi</taxon>
        <taxon>Actinopterygii</taxon>
        <taxon>Neopterygii</taxon>
        <taxon>Teleostei</taxon>
        <taxon>Neoteleostei</taxon>
        <taxon>Acanthomorphata</taxon>
        <taxon>Eupercaria</taxon>
        <taxon>Perciformes</taxon>
        <taxon>Notothenioidei</taxon>
        <taxon>Bathydraconidae</taxon>
        <taxon>Parachaenichthys</taxon>
    </lineage>
</organism>
<comment type="function">
    <text evidence="1">Metallothioneins have a high content of cysteine residues that bind various heavy metals.</text>
</comment>
<comment type="domain">
    <text>Class I metallothioneins contain 2 metal-binding domains: four divalent ions are chelated within cluster A of the alpha domain and are coordinated via cysteinyl thiolate bridges to 11 cysteine ligands. Cluster B, the corresponding region within the beta domain, can ligate three divalent ions to 9 cysteines.</text>
</comment>
<comment type="similarity">
    <text evidence="4">Belongs to the metallothionein superfamily. Type 1 family.</text>
</comment>
<sequence length="60" mass="5992">MDPCECSKSGTCNCGGSCTCTNCSCTSCKKSCCPCCPSGCTKCASGCVCKGKTCDTSCCQ</sequence>
<reference key="1">
    <citation type="journal article" date="1999" name="Mol. Biol. Evol.">
        <title>Metallothioneins in antarctic fish: evidence for independent duplication and gene conversion.</title>
        <authorList>
            <person name="Bargelloni L."/>
            <person name="Scudiero R."/>
            <person name="Parisi E."/>
            <person name="Carginale V."/>
            <person name="Capasso C."/>
            <person name="Patarnello T."/>
        </authorList>
    </citation>
    <scope>NUCLEOTIDE SEQUENCE [MRNA]</scope>
    <source>
        <tissue>Liver</tissue>
    </source>
</reference>
<feature type="chain" id="PRO_0000197306" description="Metallothionein B">
    <location>
        <begin position="1"/>
        <end position="60"/>
    </location>
</feature>
<feature type="region of interest" description="Beta">
    <location>
        <begin position="1"/>
        <end position="28"/>
    </location>
</feature>
<feature type="region of interest" description="Alpha">
    <location>
        <begin position="29"/>
        <end position="60"/>
    </location>
</feature>
<feature type="binding site" evidence="2">
    <location>
        <position position="4"/>
    </location>
    <ligand>
        <name>a divalent metal cation</name>
        <dbReference type="ChEBI" id="CHEBI:60240"/>
        <label>1</label>
        <note>in cluster B</note>
    </ligand>
</feature>
<feature type="binding site" evidence="2">
    <location>
        <position position="6"/>
    </location>
    <ligand>
        <name>a divalent metal cation</name>
        <dbReference type="ChEBI" id="CHEBI:60240"/>
        <label>1</label>
        <note>in cluster B</note>
    </ligand>
</feature>
<feature type="binding site" evidence="2">
    <location>
        <position position="6"/>
    </location>
    <ligand>
        <name>a divalent metal cation</name>
        <dbReference type="ChEBI" id="CHEBI:60240"/>
        <label>2</label>
        <note>in cluster B</note>
    </ligand>
</feature>
<feature type="binding site" evidence="2">
    <location>
        <position position="12"/>
    </location>
    <ligand>
        <name>a divalent metal cation</name>
        <dbReference type="ChEBI" id="CHEBI:60240"/>
        <label>2</label>
        <note>in cluster B</note>
    </ligand>
</feature>
<feature type="binding site" evidence="2">
    <location>
        <position position="14"/>
    </location>
    <ligand>
        <name>a divalent metal cation</name>
        <dbReference type="ChEBI" id="CHEBI:60240"/>
        <label>2</label>
        <note>in cluster B</note>
    </ligand>
</feature>
<feature type="binding site" evidence="2">
    <location>
        <position position="14"/>
    </location>
    <ligand>
        <name>a divalent metal cation</name>
        <dbReference type="ChEBI" id="CHEBI:60240"/>
        <label>3</label>
        <note>in cluster B</note>
    </ligand>
</feature>
<feature type="binding site" evidence="2">
    <location>
        <position position="18"/>
    </location>
    <ligand>
        <name>a divalent metal cation</name>
        <dbReference type="ChEBI" id="CHEBI:60240"/>
        <label>3</label>
        <note>in cluster B</note>
    </ligand>
</feature>
<feature type="binding site" evidence="2">
    <location>
        <position position="20"/>
    </location>
    <ligand>
        <name>a divalent metal cation</name>
        <dbReference type="ChEBI" id="CHEBI:60240"/>
        <label>1</label>
        <note>in cluster B</note>
    </ligand>
</feature>
<feature type="binding site" evidence="2">
    <location>
        <position position="23"/>
    </location>
    <ligand>
        <name>a divalent metal cation</name>
        <dbReference type="ChEBI" id="CHEBI:60240"/>
        <label>1</label>
        <note>in cluster B</note>
    </ligand>
</feature>
<feature type="binding site" evidence="2">
    <location>
        <position position="23"/>
    </location>
    <ligand>
        <name>a divalent metal cation</name>
        <dbReference type="ChEBI" id="CHEBI:60240"/>
        <label>3</label>
        <note>in cluster B</note>
    </ligand>
</feature>
<feature type="binding site" evidence="2">
    <location>
        <position position="25"/>
    </location>
    <ligand>
        <name>a divalent metal cation</name>
        <dbReference type="ChEBI" id="CHEBI:60240"/>
        <label>2</label>
        <note>in cluster B</note>
    </ligand>
</feature>
<feature type="binding site" evidence="2">
    <location>
        <position position="28"/>
    </location>
    <ligand>
        <name>a divalent metal cation</name>
        <dbReference type="ChEBI" id="CHEBI:60240"/>
        <label>3</label>
        <note>in cluster B</note>
    </ligand>
</feature>
<feature type="binding site" evidence="2">
    <location>
        <position position="32"/>
    </location>
    <ligand>
        <name>a divalent metal cation</name>
        <dbReference type="ChEBI" id="CHEBI:60240"/>
        <label>4</label>
        <note>in cluster A</note>
    </ligand>
</feature>
<feature type="binding site" evidence="2">
    <location>
        <position position="33"/>
    </location>
    <ligand>
        <name>a divalent metal cation</name>
        <dbReference type="ChEBI" id="CHEBI:60240"/>
        <label>4</label>
        <note>in cluster A</note>
    </ligand>
</feature>
<feature type="binding site" evidence="2">
    <location>
        <position position="33"/>
    </location>
    <ligand>
        <name>a divalent metal cation</name>
        <dbReference type="ChEBI" id="CHEBI:60240"/>
        <label>5</label>
        <note>in cluster A</note>
    </ligand>
</feature>
<feature type="binding site" evidence="2">
    <location>
        <position position="35"/>
    </location>
    <ligand>
        <name>a divalent metal cation</name>
        <dbReference type="ChEBI" id="CHEBI:60240"/>
        <label>5</label>
        <note>in cluster A</note>
    </ligand>
</feature>
<feature type="binding site" evidence="2">
    <location>
        <position position="36"/>
    </location>
    <ligand>
        <name>a divalent metal cation</name>
        <dbReference type="ChEBI" id="CHEBI:60240"/>
        <label>5</label>
        <note>in cluster A</note>
    </ligand>
</feature>
<feature type="binding site" evidence="2">
    <location>
        <position position="36"/>
    </location>
    <ligand>
        <name>a divalent metal cation</name>
        <dbReference type="ChEBI" id="CHEBI:60240"/>
        <label>6</label>
        <note>in cluster A</note>
    </ligand>
</feature>
<feature type="binding site" evidence="2">
    <location>
        <position position="40"/>
    </location>
    <ligand>
        <name>a divalent metal cation</name>
        <dbReference type="ChEBI" id="CHEBI:60240"/>
        <label>6</label>
        <note>in cluster A</note>
    </ligand>
</feature>
<feature type="binding site" evidence="2">
    <location>
        <position position="43"/>
    </location>
    <ligand>
        <name>a divalent metal cation</name>
        <dbReference type="ChEBI" id="CHEBI:60240"/>
        <label>4</label>
        <note>in cluster A</note>
    </ligand>
</feature>
<feature type="binding site" evidence="2">
    <location>
        <position position="43"/>
    </location>
    <ligand>
        <name>a divalent metal cation</name>
        <dbReference type="ChEBI" id="CHEBI:60240"/>
        <label>6</label>
        <note>in cluster A</note>
    </ligand>
</feature>
<feature type="binding site" evidence="2">
    <location>
        <position position="47"/>
    </location>
    <ligand>
        <name>a divalent metal cation</name>
        <dbReference type="ChEBI" id="CHEBI:60240"/>
        <label>4</label>
        <note>in cluster A</note>
    </ligand>
</feature>
<feature type="binding site" evidence="2">
    <location>
        <position position="49"/>
    </location>
    <ligand>
        <name>a divalent metal cation</name>
        <dbReference type="ChEBI" id="CHEBI:60240"/>
        <label>5</label>
        <note>in cluster A</note>
    </ligand>
</feature>
<feature type="binding site" evidence="2">
    <location>
        <position position="49"/>
    </location>
    <ligand>
        <name>a divalent metal cation</name>
        <dbReference type="ChEBI" id="CHEBI:60240"/>
        <label>7</label>
        <note>in cluster A</note>
    </ligand>
</feature>
<feature type="binding site" evidence="3">
    <location>
        <position position="54"/>
    </location>
    <ligand>
        <name>a divalent metal cation</name>
        <dbReference type="ChEBI" id="CHEBI:60240"/>
        <label>7</label>
        <note>in cluster A</note>
    </ligand>
</feature>
<feature type="binding site" evidence="2">
    <location>
        <position position="58"/>
    </location>
    <ligand>
        <name>a divalent metal cation</name>
        <dbReference type="ChEBI" id="CHEBI:60240"/>
        <label>7</label>
        <note>in cluster A</note>
    </ligand>
</feature>
<feature type="binding site" evidence="2">
    <location>
        <position position="59"/>
    </location>
    <ligand>
        <name>a divalent metal cation</name>
        <dbReference type="ChEBI" id="CHEBI:60240"/>
        <label>6</label>
        <note>in cluster A</note>
    </ligand>
</feature>
<feature type="binding site" evidence="2">
    <location>
        <position position="59"/>
    </location>
    <ligand>
        <name>a divalent metal cation</name>
        <dbReference type="ChEBI" id="CHEBI:60240"/>
        <label>7</label>
        <note>in cluster A</note>
    </ligand>
</feature>
<protein>
    <recommendedName>
        <fullName>Metallothionein B</fullName>
        <shortName>MT-B</shortName>
        <shortName>MT-II</shortName>
    </recommendedName>
</protein>
<evidence type="ECO:0000250" key="1"/>
<evidence type="ECO:0000250" key="2">
    <source>
        <dbReference type="UniProtKB" id="P02795"/>
    </source>
</evidence>
<evidence type="ECO:0000250" key="3">
    <source>
        <dbReference type="UniProtKB" id="P62339"/>
    </source>
</evidence>
<evidence type="ECO:0000305" key="4"/>
<accession>P62682</accession>
<accession>Q92145</accession>
<gene>
    <name type="primary">mtb</name>
</gene>
<name>MTB_PARCR</name>
<proteinExistence type="inferred from homology"/>
<dbReference type="EMBL" id="AJ007951">
    <property type="protein sequence ID" value="CAA07786.1"/>
    <property type="molecule type" value="mRNA"/>
</dbReference>
<dbReference type="SMR" id="P62682"/>
<dbReference type="GO" id="GO:0046872">
    <property type="term" value="F:metal ion binding"/>
    <property type="evidence" value="ECO:0007669"/>
    <property type="project" value="UniProtKB-KW"/>
</dbReference>
<dbReference type="FunFam" id="4.10.10.10:FF:000001">
    <property type="entry name" value="Metallothionein"/>
    <property type="match status" value="1"/>
</dbReference>
<dbReference type="Gene3D" id="4.10.10.10">
    <property type="entry name" value="Metallothionein Isoform II"/>
    <property type="match status" value="1"/>
</dbReference>
<dbReference type="InterPro" id="IPR017854">
    <property type="entry name" value="Metalthion_dom_sf"/>
</dbReference>
<dbReference type="InterPro" id="IPR023587">
    <property type="entry name" value="Metalthion_dom_sf_vert"/>
</dbReference>
<dbReference type="InterPro" id="IPR000006">
    <property type="entry name" value="Metalthion_vert"/>
</dbReference>
<dbReference type="InterPro" id="IPR018064">
    <property type="entry name" value="Metalthion_vert_metal_BS"/>
</dbReference>
<dbReference type="PANTHER" id="PTHR23299">
    <property type="entry name" value="METALLOTHIONEIN"/>
    <property type="match status" value="1"/>
</dbReference>
<dbReference type="PANTHER" id="PTHR23299:SF24">
    <property type="entry name" value="METALLOTHIONEIN-1X"/>
    <property type="match status" value="1"/>
</dbReference>
<dbReference type="Pfam" id="PF00131">
    <property type="entry name" value="Metallothio"/>
    <property type="match status" value="1"/>
</dbReference>
<dbReference type="PRINTS" id="PR00860">
    <property type="entry name" value="MTVERTEBRATE"/>
</dbReference>
<dbReference type="SUPFAM" id="SSF57868">
    <property type="entry name" value="Metallothionein"/>
    <property type="match status" value="1"/>
</dbReference>
<dbReference type="PROSITE" id="PS00203">
    <property type="entry name" value="METALLOTHIONEIN_VRT"/>
    <property type="match status" value="1"/>
</dbReference>
<keyword id="KW-0479">Metal-binding</keyword>
<keyword id="KW-0480">Metal-thiolate cluster</keyword>